<proteinExistence type="evidence at protein level"/>
<reference key="1">
    <citation type="journal article" date="1991" name="Eur. J. Biochem.">
        <title>Primary structure of nuclease P1 from Penicillium citrinum.</title>
        <authorList>
            <person name="Maekewa K."/>
            <person name="Tsunasawa S."/>
            <person name="Dibo G."/>
            <person name="Sakiyama F."/>
        </authorList>
    </citation>
    <scope>PROTEIN SEQUENCE</scope>
</reference>
<reference key="2">
    <citation type="journal article" date="1991" name="EMBO J.">
        <title>Crystal structure of Penicillium citrinum P1 nuclease at 2.8-A resolution.</title>
        <authorList>
            <person name="Volbeda A."/>
            <person name="Lahm A."/>
            <person name="Sakiyama F."/>
            <person name="Suck D."/>
        </authorList>
    </citation>
    <scope>X-RAY CRYSTALLOGRAPHY (2.8 ANGSTROMS)</scope>
</reference>
<reference key="3">
    <citation type="journal article" date="1998" name="Proteins">
        <title>Recognition of single-stranded DNA by nuclease P1: high resolution crystal structures of complexes with substrate analogs.</title>
        <authorList>
            <person name="Romier C."/>
            <person name="Dominguez R."/>
            <person name="Lahm A."/>
            <person name="Dahl O."/>
            <person name="Suck D."/>
        </authorList>
    </citation>
    <scope>X-RAY CRYSTALLOGRAPHY (1.80 ANGSTROMS) IN COMPLEX WITH SUBSTRATE AND ZINC</scope>
    <scope>GLYCOSYLATION AT ASN-92; ASN-138 AND ASN-197</scope>
    <scope>DISULFIDE BONDS</scope>
</reference>
<organism>
    <name type="scientific">Penicillium citrinum</name>
    <dbReference type="NCBI Taxonomy" id="5077"/>
    <lineage>
        <taxon>Eukaryota</taxon>
        <taxon>Fungi</taxon>
        <taxon>Dikarya</taxon>
        <taxon>Ascomycota</taxon>
        <taxon>Pezizomycotina</taxon>
        <taxon>Eurotiomycetes</taxon>
        <taxon>Eurotiomycetidae</taxon>
        <taxon>Eurotiales</taxon>
        <taxon>Aspergillaceae</taxon>
        <taxon>Penicillium</taxon>
    </lineage>
</organism>
<sequence length="270" mass="29227">WGALGHATVAYVAQHYVSPEAASWAQGILGSSSSSYLASIASWADEYRLTSAGKWSASLHFIDAEDNPPTNCNVDYERDCGSSGCSISAIANYTQRVSDSSLSSENHAEALRFLVHFIGDMTQPLHDEAYAVGGNKINVTFDGYHDNLHSDWDTYMPQKLIGGHALSDAESWAKTLVQNIESGNYTAQAIGWIKGDNISEPITTATRWASDANALVCTVVMPHGAAALQTGDLYPTYYDSVIDTIELQIAKGGYRLANWINEIHGSEIAK</sequence>
<accession>P24289</accession>
<feature type="chain" id="PRO_0000058003" description="Nuclease P1">
    <location>
        <begin position="1"/>
        <end position="270"/>
    </location>
</feature>
<feature type="region of interest" description="Substrate binding" evidence="5 8">
    <location>
        <begin position="116"/>
        <end position="164"/>
    </location>
</feature>
<feature type="binding site" evidence="2">
    <location>
        <begin position="1"/>
        <end position="6"/>
    </location>
    <ligand>
        <name>substrate</name>
    </ligand>
</feature>
<feature type="binding site" evidence="5 8">
    <location>
        <position position="1"/>
    </location>
    <ligand>
        <name>a divalent metal cation</name>
        <dbReference type="ChEBI" id="CHEBI:60240"/>
        <label>3</label>
    </ligand>
</feature>
<feature type="binding site" evidence="5 8">
    <location>
        <position position="6"/>
    </location>
    <ligand>
        <name>a divalent metal cation</name>
        <dbReference type="ChEBI" id="CHEBI:60240"/>
        <label>3</label>
    </ligand>
</feature>
<feature type="binding site" evidence="5 8">
    <location>
        <position position="15"/>
    </location>
    <ligand>
        <name>a divalent metal cation</name>
        <dbReference type="ChEBI" id="CHEBI:60240"/>
        <label>2</label>
    </ligand>
</feature>
<feature type="binding site" evidence="2">
    <location>
        <begin position="45"/>
        <end position="51"/>
    </location>
    <ligand>
        <name>substrate</name>
    </ligand>
</feature>
<feature type="binding site" evidence="2">
    <location>
        <position position="45"/>
    </location>
    <ligand>
        <name>a divalent metal cation</name>
        <dbReference type="ChEBI" id="CHEBI:60240"/>
        <label>1</label>
    </ligand>
</feature>
<feature type="binding site" evidence="5 8">
    <location>
        <begin position="60"/>
        <end position="63"/>
    </location>
    <ligand>
        <name>substrate</name>
    </ligand>
</feature>
<feature type="binding site" evidence="5 8">
    <location>
        <position position="60"/>
    </location>
    <ligand>
        <name>a divalent metal cation</name>
        <dbReference type="ChEBI" id="CHEBI:60240"/>
        <label>1</label>
    </ligand>
</feature>
<feature type="binding site" evidence="5 8">
    <location>
        <begin position="73"/>
        <end position="78"/>
    </location>
    <ligand>
        <name>substrate</name>
    </ligand>
</feature>
<feature type="binding site" evidence="5 8">
    <location>
        <position position="116"/>
    </location>
    <ligand>
        <name>a divalent metal cation</name>
        <dbReference type="ChEBI" id="CHEBI:60240"/>
        <label>1</label>
    </ligand>
</feature>
<feature type="binding site" evidence="5 8">
    <location>
        <position position="120"/>
    </location>
    <ligand>
        <name>a divalent metal cation</name>
        <dbReference type="ChEBI" id="CHEBI:60240"/>
        <label>1</label>
    </ligand>
</feature>
<feature type="binding site" evidence="5 8">
    <location>
        <position position="120"/>
    </location>
    <ligand>
        <name>a divalent metal cation</name>
        <dbReference type="ChEBI" id="CHEBI:60240"/>
        <label>3</label>
    </ligand>
</feature>
<feature type="binding site" evidence="5 8">
    <location>
        <position position="126"/>
    </location>
    <ligand>
        <name>a divalent metal cation</name>
        <dbReference type="ChEBI" id="CHEBI:60240"/>
        <label>2</label>
    </ligand>
</feature>
<feature type="binding site" evidence="5 8">
    <location>
        <position position="149"/>
    </location>
    <ligand>
        <name>a divalent metal cation</name>
        <dbReference type="ChEBI" id="CHEBI:60240"/>
        <label>2</label>
    </ligand>
</feature>
<feature type="binding site" evidence="5 8">
    <location>
        <position position="153"/>
    </location>
    <ligand>
        <name>a divalent metal cation</name>
        <dbReference type="ChEBI" id="CHEBI:60240"/>
        <label>2</label>
    </ligand>
</feature>
<feature type="site" description="Important for catalytic activity" evidence="1">
    <location>
        <position position="45"/>
    </location>
</feature>
<feature type="site" description="Important for catalytic activity" evidence="5 8">
    <location>
        <position position="48"/>
    </location>
</feature>
<feature type="glycosylation site" description="N-linked (GlcNAc...) asparagine" evidence="4 5 8">
    <location>
        <position position="92"/>
    </location>
</feature>
<feature type="glycosylation site" description="N-linked (GlcNAc...) asparagine" evidence="4 5 8">
    <location>
        <position position="138"/>
    </location>
</feature>
<feature type="glycosylation site" description="N-linked (GlcNAc...) asparagine" evidence="4">
    <location>
        <position position="184"/>
    </location>
</feature>
<feature type="glycosylation site" description="N-linked (GlcNAc...) asparagine" evidence="4 5 8">
    <location>
        <position position="197"/>
    </location>
</feature>
<feature type="disulfide bond" evidence="5 8">
    <location>
        <begin position="72"/>
        <end position="217"/>
    </location>
</feature>
<feature type="disulfide bond" evidence="5 8">
    <location>
        <begin position="80"/>
        <end position="85"/>
    </location>
</feature>
<feature type="sequence variant">
    <location>
        <position position="270"/>
    </location>
</feature>
<feature type="helix" evidence="9">
    <location>
        <begin position="3"/>
        <end position="16"/>
    </location>
</feature>
<feature type="helix" evidence="9">
    <location>
        <begin position="19"/>
        <end position="29"/>
    </location>
</feature>
<feature type="turn" evidence="9">
    <location>
        <begin position="34"/>
        <end position="37"/>
    </location>
</feature>
<feature type="helix" evidence="9">
    <location>
        <begin position="38"/>
        <end position="40"/>
    </location>
</feature>
<feature type="helix" evidence="9">
    <location>
        <begin position="43"/>
        <end position="48"/>
    </location>
</feature>
<feature type="turn" evidence="9">
    <location>
        <begin position="51"/>
        <end position="53"/>
    </location>
</feature>
<feature type="helix" evidence="9">
    <location>
        <begin position="54"/>
        <end position="60"/>
    </location>
</feature>
<feature type="turn" evidence="9">
    <location>
        <begin position="68"/>
        <end position="70"/>
    </location>
</feature>
<feature type="helix" evidence="9">
    <location>
        <begin position="76"/>
        <end position="79"/>
    </location>
</feature>
<feature type="helix" evidence="9">
    <location>
        <begin position="86"/>
        <end position="97"/>
    </location>
</feature>
<feature type="helix" evidence="9">
    <location>
        <begin position="104"/>
        <end position="120"/>
    </location>
</feature>
<feature type="helix" evidence="9">
    <location>
        <begin position="124"/>
        <end position="127"/>
    </location>
</feature>
<feature type="helix" evidence="9">
    <location>
        <begin position="130"/>
        <end position="133"/>
    </location>
</feature>
<feature type="turn" evidence="9">
    <location>
        <begin position="134"/>
        <end position="136"/>
    </location>
</feature>
<feature type="strand" evidence="9">
    <location>
        <begin position="138"/>
        <end position="141"/>
    </location>
</feature>
<feature type="strand" evidence="9">
    <location>
        <begin position="144"/>
        <end position="147"/>
    </location>
</feature>
<feature type="helix" evidence="9">
    <location>
        <begin position="148"/>
        <end position="153"/>
    </location>
</feature>
<feature type="helix" evidence="9">
    <location>
        <begin position="155"/>
        <end position="161"/>
    </location>
</feature>
<feature type="helix" evidence="9">
    <location>
        <begin position="166"/>
        <end position="181"/>
    </location>
</feature>
<feature type="helix" evidence="9">
    <location>
        <begin position="186"/>
        <end position="193"/>
    </location>
</feature>
<feature type="helix" evidence="9">
    <location>
        <begin position="201"/>
        <end position="218"/>
    </location>
</feature>
<feature type="helix" evidence="9">
    <location>
        <begin position="226"/>
        <end position="228"/>
    </location>
</feature>
<feature type="strand" evidence="9">
    <location>
        <begin position="229"/>
        <end position="232"/>
    </location>
</feature>
<feature type="helix" evidence="9">
    <location>
        <begin position="236"/>
        <end position="263"/>
    </location>
</feature>
<keyword id="KW-0002">3D-structure</keyword>
<keyword id="KW-0903">Direct protein sequencing</keyword>
<keyword id="KW-1015">Disulfide bond</keyword>
<keyword id="KW-0255">Endonuclease</keyword>
<keyword id="KW-0325">Glycoprotein</keyword>
<keyword id="KW-0378">Hydrolase</keyword>
<keyword id="KW-0479">Metal-binding</keyword>
<keyword id="KW-0540">Nuclease</keyword>
<keyword id="KW-0964">Secreted</keyword>
<keyword id="KW-0862">Zinc</keyword>
<name>NUP1_PENCI</name>
<protein>
    <recommendedName>
        <fullName evidence="6">Nuclease P1</fullName>
        <ecNumber evidence="3">3.1.30.1</ecNumber>
    </recommendedName>
    <alternativeName>
        <fullName evidence="6">Deoxyribonuclease P1</fullName>
    </alternativeName>
    <alternativeName>
        <fullName evidence="6">Endonuclease P1</fullName>
    </alternativeName>
</protein>
<comment type="function">
    <text evidence="3">Hydrolyzes only single-stranded DNA and RNA without apparent specificity for bases.</text>
</comment>
<comment type="catalytic activity">
    <reaction evidence="3">
        <text>Endonucleolytic cleavage to 5'-phosphomononucleotide and 5'-phosphooligonucleotide end-products.</text>
        <dbReference type="EC" id="3.1.30.1"/>
    </reaction>
</comment>
<comment type="cofactor">
    <cofactor evidence="5">
        <name>Zn(2+)</name>
        <dbReference type="ChEBI" id="CHEBI:29105"/>
    </cofactor>
    <text evidence="5">Binds 3 divalent metal cations.</text>
</comment>
<comment type="subcellular location">
    <subcellularLocation>
        <location>Secreted</location>
    </subcellularLocation>
</comment>
<comment type="similarity">
    <text evidence="7">Belongs to the nuclease type I family.</text>
</comment>
<dbReference type="EC" id="3.1.30.1" evidence="3"/>
<dbReference type="PIR" id="S17828">
    <property type="entry name" value="S17828"/>
</dbReference>
<dbReference type="PDB" id="1AK0">
    <property type="method" value="X-ray"/>
    <property type="resolution" value="1.80 A"/>
    <property type="chains" value="A=1-270"/>
</dbReference>
<dbReference type="PDBsum" id="1AK0"/>
<dbReference type="SMR" id="P24289"/>
<dbReference type="ChEMBL" id="CHEMBL4802006"/>
<dbReference type="DrugBank" id="DB03011">
    <property type="generic name" value="Adenosine-5'-(Dithio)Phosphate"/>
</dbReference>
<dbReference type="DrugBank" id="DB02980">
    <property type="generic name" value="Thymidine-5'-(dithio)phosphate"/>
</dbReference>
<dbReference type="iPTMnet" id="P24289"/>
<dbReference type="EvolutionaryTrace" id="P24289"/>
<dbReference type="GO" id="GO:0005576">
    <property type="term" value="C:extracellular region"/>
    <property type="evidence" value="ECO:0007669"/>
    <property type="project" value="UniProtKB-SubCell"/>
</dbReference>
<dbReference type="GO" id="GO:0004519">
    <property type="term" value="F:endonuclease activity"/>
    <property type="evidence" value="ECO:0007669"/>
    <property type="project" value="UniProtKB-KW"/>
</dbReference>
<dbReference type="GO" id="GO:0046872">
    <property type="term" value="F:metal ion binding"/>
    <property type="evidence" value="ECO:0007669"/>
    <property type="project" value="UniProtKB-KW"/>
</dbReference>
<dbReference type="GO" id="GO:0003676">
    <property type="term" value="F:nucleic acid binding"/>
    <property type="evidence" value="ECO:0007669"/>
    <property type="project" value="InterPro"/>
</dbReference>
<dbReference type="GO" id="GO:0006308">
    <property type="term" value="P:DNA catabolic process"/>
    <property type="evidence" value="ECO:0007669"/>
    <property type="project" value="InterPro"/>
</dbReference>
<dbReference type="CDD" id="cd11010">
    <property type="entry name" value="S1-P1_nuclease"/>
    <property type="match status" value="1"/>
</dbReference>
<dbReference type="Gene3D" id="1.10.575.10">
    <property type="entry name" value="P1 Nuclease"/>
    <property type="match status" value="1"/>
</dbReference>
<dbReference type="InterPro" id="IPR008947">
    <property type="entry name" value="PLipase_C/P1_nuclease_dom_sf"/>
</dbReference>
<dbReference type="InterPro" id="IPR003154">
    <property type="entry name" value="S1/P1nuclease"/>
</dbReference>
<dbReference type="PANTHER" id="PTHR33146">
    <property type="entry name" value="ENDONUCLEASE 4"/>
    <property type="match status" value="1"/>
</dbReference>
<dbReference type="PANTHER" id="PTHR33146:SF26">
    <property type="entry name" value="ENDONUCLEASE 4"/>
    <property type="match status" value="1"/>
</dbReference>
<dbReference type="Pfam" id="PF02265">
    <property type="entry name" value="S1-P1_nuclease"/>
    <property type="match status" value="1"/>
</dbReference>
<dbReference type="SUPFAM" id="SSF48537">
    <property type="entry name" value="Phospholipase C/P1 nuclease"/>
    <property type="match status" value="1"/>
</dbReference>
<evidence type="ECO:0000250" key="1">
    <source>
        <dbReference type="UniProtKB" id="P24021"/>
    </source>
</evidence>
<evidence type="ECO:0000250" key="2">
    <source>
        <dbReference type="UniProtKB" id="Q9C9G4"/>
    </source>
</evidence>
<evidence type="ECO:0000250" key="3">
    <source>
        <dbReference type="UniProtKB" id="Q9SXA6"/>
    </source>
</evidence>
<evidence type="ECO:0000255" key="4">
    <source>
        <dbReference type="PROSITE-ProRule" id="PRU00498"/>
    </source>
</evidence>
<evidence type="ECO:0000269" key="5">
    <source>
    </source>
</evidence>
<evidence type="ECO:0000303" key="6">
    <source>
    </source>
</evidence>
<evidence type="ECO:0000305" key="7"/>
<evidence type="ECO:0007744" key="8">
    <source>
        <dbReference type="PDB" id="1AK0"/>
    </source>
</evidence>
<evidence type="ECO:0007829" key="9">
    <source>
        <dbReference type="PDB" id="1AK0"/>
    </source>
</evidence>